<gene>
    <name evidence="1" type="primary">M</name>
</gene>
<proteinExistence type="evidence at protein level"/>
<keyword id="KW-0002">3D-structure</keyword>
<keyword id="KW-0025">Alternative splicing</keyword>
<keyword id="KW-1015">Disulfide bond</keyword>
<keyword id="KW-0325">Glycoprotein</keyword>
<keyword id="KW-1032">Host cell membrane</keyword>
<keyword id="KW-1043">Host membrane</keyword>
<keyword id="KW-0945">Host-virus interaction</keyword>
<keyword id="KW-0375">Hydrogen ion transport</keyword>
<keyword id="KW-1083">Inhibition of host autophagy by virus</keyword>
<keyword id="KW-0407">Ion channel</keyword>
<keyword id="KW-0406">Ion transport</keyword>
<keyword id="KW-0449">Lipoprotein</keyword>
<keyword id="KW-0472">Membrane</keyword>
<keyword id="KW-0564">Palmitate</keyword>
<keyword id="KW-0597">Phosphoprotein</keyword>
<keyword id="KW-0735">Signal-anchor</keyword>
<keyword id="KW-0812">Transmembrane</keyword>
<keyword id="KW-1133">Transmembrane helix</keyword>
<keyword id="KW-0813">Transport</keyword>
<keyword id="KW-1182">Viral ion channel</keyword>
<keyword id="KW-0946">Virion</keyword>
<organismHost>
    <name type="scientific">Aves</name>
    <dbReference type="NCBI Taxonomy" id="8782"/>
</organismHost>
<organismHost>
    <name type="scientific">Homo sapiens</name>
    <name type="common">Human</name>
    <dbReference type="NCBI Taxonomy" id="9606"/>
</organismHost>
<organismHost>
    <name type="scientific">Sus scrofa</name>
    <name type="common">Pig</name>
    <dbReference type="NCBI Taxonomy" id="9823"/>
</organismHost>
<evidence type="ECO:0000255" key="1">
    <source>
        <dbReference type="HAMAP-Rule" id="MF_04069"/>
    </source>
</evidence>
<evidence type="ECO:0000256" key="2">
    <source>
        <dbReference type="SAM" id="MobiDB-lite"/>
    </source>
</evidence>
<evidence type="ECO:0007829" key="3">
    <source>
        <dbReference type="PDB" id="1NYJ"/>
    </source>
</evidence>
<dbReference type="EMBL" id="X53029">
    <property type="protein sequence ID" value="CAB38716.1"/>
    <property type="molecule type" value="Genomic_RNA"/>
</dbReference>
<dbReference type="EMBL" id="CY010373">
    <property type="protein sequence ID" value="ABD95352.1"/>
    <property type="molecule type" value="Genomic_RNA"/>
</dbReference>
<dbReference type="EMBL" id="DQ508900">
    <property type="protein sequence ID" value="ABF21315.1"/>
    <property type="molecule type" value="Genomic_RNA"/>
</dbReference>
<dbReference type="PDB" id="1NYJ">
    <property type="method" value="NMR"/>
    <property type="chains" value="A/B/C/D=22-46"/>
</dbReference>
<dbReference type="PDB" id="2H95">
    <property type="method" value="NMR"/>
    <property type="chains" value="A/B/C/D=26-43"/>
</dbReference>
<dbReference type="PDBsum" id="1NYJ"/>
<dbReference type="PDBsum" id="2H95"/>
<dbReference type="SMR" id="P35938"/>
<dbReference type="TCDB" id="1.A.19.1.1">
    <property type="family name" value="the type a influenza virus matrix-2 channel (m2-c) family"/>
</dbReference>
<dbReference type="GlyCosmos" id="P35938">
    <property type="glycosylation" value="1 site, No reported glycans"/>
</dbReference>
<dbReference type="EvolutionaryTrace" id="P35938"/>
<dbReference type="Proteomes" id="UP000007793">
    <property type="component" value="Genome"/>
</dbReference>
<dbReference type="Proteomes" id="UP000121508">
    <property type="component" value="Genome"/>
</dbReference>
<dbReference type="GO" id="GO:0020002">
    <property type="term" value="C:host cell plasma membrane"/>
    <property type="evidence" value="ECO:0007669"/>
    <property type="project" value="UniProtKB-SubCell"/>
</dbReference>
<dbReference type="GO" id="GO:0016020">
    <property type="term" value="C:membrane"/>
    <property type="evidence" value="ECO:0007669"/>
    <property type="project" value="UniProtKB-UniRule"/>
</dbReference>
<dbReference type="GO" id="GO:0055036">
    <property type="term" value="C:virion membrane"/>
    <property type="evidence" value="ECO:0007669"/>
    <property type="project" value="UniProtKB-SubCell"/>
</dbReference>
<dbReference type="GO" id="GO:0005216">
    <property type="term" value="F:monoatomic ion channel activity"/>
    <property type="evidence" value="ECO:0007669"/>
    <property type="project" value="UniProtKB-UniRule"/>
</dbReference>
<dbReference type="GO" id="GO:0015078">
    <property type="term" value="F:proton transmembrane transporter activity"/>
    <property type="evidence" value="ECO:0007669"/>
    <property type="project" value="UniProtKB-UniRule"/>
</dbReference>
<dbReference type="GO" id="GO:0051259">
    <property type="term" value="P:protein complex oligomerization"/>
    <property type="evidence" value="ECO:0007669"/>
    <property type="project" value="UniProtKB-UniRule"/>
</dbReference>
<dbReference type="GO" id="GO:0044694">
    <property type="term" value="P:symbiont genome entry into host cell via pore formation in plasma membrane"/>
    <property type="evidence" value="ECO:0007669"/>
    <property type="project" value="UniProtKB-UniRule"/>
</dbReference>
<dbReference type="GO" id="GO:0140321">
    <property type="term" value="P:symbiont-mediated suppression of host autophagy"/>
    <property type="evidence" value="ECO:0007669"/>
    <property type="project" value="UniProtKB-KW"/>
</dbReference>
<dbReference type="Gene3D" id="6.10.250.1640">
    <property type="match status" value="1"/>
</dbReference>
<dbReference type="HAMAP" id="MF_04069">
    <property type="entry name" value="INFV_M2"/>
    <property type="match status" value="1"/>
</dbReference>
<dbReference type="InterPro" id="IPR002089">
    <property type="entry name" value="Flu_M2"/>
</dbReference>
<dbReference type="Pfam" id="PF00599">
    <property type="entry name" value="Flu_M2"/>
    <property type="match status" value="1"/>
</dbReference>
<protein>
    <recommendedName>
        <fullName evidence="1">Matrix protein 2</fullName>
    </recommendedName>
    <alternativeName>
        <fullName evidence="1">Proton channel protein M2</fullName>
    </alternativeName>
</protein>
<reference key="1">
    <citation type="journal article" date="1985" name="Bioorg. Khim.">
        <title>Primary structure of fragment 7 of the influenza virus A/USSR/90/77(H1N1) RNA.</title>
        <authorList>
            <person name="Samokhvalov E.I."/>
            <person name="Kongenov V.A."/>
            <person name="Chizhikov V.E."/>
            <person name="Blinov V.M."/>
            <person name="Yuferov V.P."/>
            <person name="Vasilenko S.K."/>
            <person name="Uryvaev L.V."/>
            <person name="Zhdanov V.M."/>
        </authorList>
    </citation>
    <scope>NUCLEOTIDE SEQUENCE [GENOMIC RNA]</scope>
</reference>
<reference key="2">
    <citation type="submission" date="2006-03" db="EMBL/GenBank/DDBJ databases">
        <title>The NIAID influenza genome sequencing project.</title>
        <authorList>
            <person name="Ghedin E."/>
            <person name="Spiro D."/>
            <person name="Miller N."/>
            <person name="Zaborsky J."/>
            <person name="Feldblyum T."/>
            <person name="Subbu V."/>
            <person name="Shumway M."/>
            <person name="Sparenborg J."/>
            <person name="Groveman L."/>
            <person name="Halpin R."/>
            <person name="Sitz J."/>
            <person name="Koo H."/>
            <person name="Salzberg S.L."/>
            <person name="Webster R.G."/>
            <person name="Hoffmann E."/>
            <person name="Krauss S."/>
            <person name="Naeve C."/>
            <person name="Bao Y."/>
            <person name="Bolotov P."/>
            <person name="Dernovoy D."/>
            <person name="Kiryutin B."/>
            <person name="Lipman D.J."/>
            <person name="Tatusova T."/>
        </authorList>
    </citation>
    <scope>NUCLEOTIDE SEQUENCE [GENOMIC RNA]</scope>
</reference>
<reference key="3">
    <citation type="submission" date="2006-04" db="EMBL/GenBank/DDBJ databases">
        <title>Complete genome sequencing and analysis of selected influenza virus vaccine strains spanning six decades (1933-1999).</title>
        <authorList>
            <person name="Mbawuike I.N."/>
            <person name="Zhang Y."/>
            <person name="Yamada R.E."/>
            <person name="Nino D."/>
            <person name="Bui H.-H."/>
            <person name="Sette A."/>
            <person name="Couch R.B."/>
        </authorList>
    </citation>
    <scope>NUCLEOTIDE SEQUENCE [GENOMIC RNA]</scope>
</reference>
<reference key="4">
    <citation type="journal article" date="2004" name="Virus Res.">
        <title>Assembly and budding of influenza virus.</title>
        <authorList>
            <person name="Nayak D.P."/>
            <person name="Hui E.K."/>
            <person name="Barman S."/>
        </authorList>
    </citation>
    <scope>REVIEW</scope>
</reference>
<reference key="5">
    <citation type="journal article" date="2003" name="FEBS Lett.">
        <title>Proton conduction through the M2 protein of the influenza A virus; a quantitative, mechanistic analysis of experimental data.</title>
        <authorList>
            <person name="Lear J.D."/>
        </authorList>
    </citation>
    <scope>REVIEW</scope>
</reference>
<reference key="6">
    <citation type="journal article" date="2003" name="FEBS Lett.">
        <title>Computational studies of proton transport through the M2 channel.</title>
        <authorList>
            <person name="Wu Y."/>
            <person name="Voth G.A."/>
        </authorList>
    </citation>
    <scope>REVIEW</scope>
</reference>
<reference key="7">
    <citation type="journal article" date="2002" name="Biochemistry">
        <title>The closed state of a H+ channel helical bundle combining precise orientational and distance restraints from solid state NMR.</title>
        <authorList>
            <person name="Nishimura K."/>
            <person name="Kim S."/>
            <person name="Zhang L."/>
            <person name="Cross T.A."/>
        </authorList>
    </citation>
    <scope>STRUCTURE BY NMR OF 22-46</scope>
</reference>
<accession>P35938</accession>
<accession>Q1WP08</accession>
<accession>Q67158</accession>
<accession>Q67159</accession>
<comment type="function">
    <text evidence="1">Forms a proton-selective ion channel that is necessary for the efficient release of the viral genome during virus entry. After attaching to the cell surface, the virion enters the cell by endocytosis. Acidification of the endosome triggers M2 ion channel activity. The influx of protons into virion interior is believed to disrupt interactions between the viral ribonucleoprotein (RNP), matrix protein 1 (M1), and lipid bilayers, thereby freeing the viral genome from interaction with viral proteins and enabling RNA segments to migrate to the host cell nucleus, where influenza virus RNA transcription and replication occur. Also plays a role in viral proteins secretory pathway. Elevates the intravesicular pH of normally acidic compartments, such as trans-Golgi network, preventing newly formed hemagglutinin from premature switching to the fusion-active conformation.</text>
</comment>
<comment type="activity regulation">
    <text>The M2 protein from most influenza A strains is inhibited by amantadine and rimantadine, resulting in viral uncoating incapacity. Emergence of amantadine-resistant variants is usually rapid.</text>
</comment>
<comment type="subunit">
    <text evidence="1">Homotetramer; composed of two disulfide-linked dimers held together by non-covalent interactions. May interact with matrix protein 1.</text>
</comment>
<comment type="subcellular location">
    <subcellularLocation>
        <location evidence="1">Virion membrane</location>
    </subcellularLocation>
    <subcellularLocation>
        <location evidence="1">Host apical cell membrane</location>
        <topology evidence="1">Single-pass type III membrane protein</topology>
    </subcellularLocation>
    <text evidence="1">Abundantly expressed at the apical plasma membrane in infected polarized epithelial cells, in close proximity to budding and assembled virions. Minor component of virions (only 16-20 molecules/virion).</text>
</comment>
<comment type="alternative products">
    <event type="alternative splicing"/>
    <isoform>
        <id>P35938-1</id>
        <name>M2</name>
        <sequence type="displayed"/>
    </isoform>
    <isoform>
        <id>P35937-1</id>
        <name>M1</name>
        <sequence type="external"/>
    </isoform>
    <text>Only the first 9 residues are shared by the 2 isoforms.</text>
</comment>
<comment type="domain">
    <text evidence="1">Cytoplasmic tail plays an important role in virion assembly and morphogenesis.</text>
</comment>
<comment type="miscellaneous">
    <text evidence="1">When the channel is activated, one or more imidazole moieties of His-37 probably become bi-protonated.</text>
</comment>
<comment type="similarity">
    <text evidence="1">Belongs to the influenza viruses matrix protein M2 family.</text>
</comment>
<feature type="chain" id="PRO_0000078893" description="Matrix protein 2">
    <location>
        <begin position="1"/>
        <end position="97"/>
    </location>
</feature>
<feature type="topological domain" description="Virion surface" evidence="1">
    <location>
        <begin position="1"/>
        <end position="22"/>
    </location>
</feature>
<feature type="transmembrane region" description="Helical; Signal-anchor for type III membrane protein" evidence="1">
    <location>
        <begin position="23"/>
        <end position="43"/>
    </location>
</feature>
<feature type="topological domain" description="Intravirion" evidence="1">
    <location>
        <begin position="44"/>
        <end position="97"/>
    </location>
</feature>
<feature type="region of interest" description="Disordered" evidence="2">
    <location>
        <begin position="59"/>
        <end position="84"/>
    </location>
</feature>
<feature type="compositionally biased region" description="Basic and acidic residues" evidence="2">
    <location>
        <begin position="71"/>
        <end position="80"/>
    </location>
</feature>
<feature type="site" description="Essential for channel activity, possibly by being protonated during channel activation, and by forming the channel gate and the selective filter" evidence="1">
    <location>
        <position position="37"/>
    </location>
</feature>
<feature type="site" description="Seems to be involved in pH gating" evidence="1">
    <location>
        <position position="41"/>
    </location>
</feature>
<feature type="modified residue" description="Phosphoserine; by host" evidence="1">
    <location>
        <position position="64"/>
    </location>
</feature>
<feature type="lipid moiety-binding region" description="S-palmitoyl cysteine; by host" evidence="1">
    <location>
        <position position="50"/>
    </location>
</feature>
<feature type="glycosylation site" description="N-linked (GlcNAc...) asparagine; by host" evidence="1">
    <location>
        <position position="20"/>
    </location>
</feature>
<feature type="disulfide bond" description="Interchain (with C-17)" evidence="1">
    <location>
        <position position="17"/>
    </location>
</feature>
<feature type="disulfide bond" description="Interchain (with C-19)" evidence="1">
    <location>
        <position position="19"/>
    </location>
</feature>
<feature type="helix" evidence="3">
    <location>
        <begin position="23"/>
        <end position="45"/>
    </location>
</feature>
<sequence>MSLLTEVETPIRNEWGCRCNDSSDPLVVAASIIGILHLILWILDRLFFKCIYRLFKHGLKRGPSTEGVPESMREEYRKEQQNAVDADDSHFVNIELE</sequence>
<name>M2_I77AB</name>
<organism>
    <name type="scientific">Influenza A virus (strain A/USSR/90/1977 H1N1)</name>
    <dbReference type="NCBI Taxonomy" id="381516"/>
    <lineage>
        <taxon>Viruses</taxon>
        <taxon>Riboviria</taxon>
        <taxon>Orthornavirae</taxon>
        <taxon>Negarnaviricota</taxon>
        <taxon>Polyploviricotina</taxon>
        <taxon>Insthoviricetes</taxon>
        <taxon>Articulavirales</taxon>
        <taxon>Orthomyxoviridae</taxon>
        <taxon>Alphainfluenzavirus</taxon>
        <taxon>Alphainfluenzavirus influenzae</taxon>
        <taxon>Influenza A virus</taxon>
    </lineage>
</organism>